<feature type="chain" id="PRO_0000164884" description="Lysis protein">
    <location>
        <begin position="1"/>
        <end position="75"/>
    </location>
</feature>
<protein>
    <recommendedName>
        <fullName>Lysis protein</fullName>
        <shortName>E protein</shortName>
    </recommendedName>
    <alternativeName>
        <fullName>GPE</fullName>
    </alternativeName>
</protein>
<gene>
    <name type="primary">E</name>
</gene>
<proteinExistence type="predicted"/>
<dbReference type="EMBL" id="X60323">
    <property type="protein sequence ID" value="CAA42889.1"/>
    <property type="molecule type" value="Genomic_DNA"/>
</dbReference>
<dbReference type="RefSeq" id="NP_043947.1">
    <property type="nucleotide sequence ID" value="NC_001730.1"/>
</dbReference>
<dbReference type="SMR" id="Q38040"/>
<dbReference type="GeneID" id="1261197"/>
<dbReference type="KEGG" id="vg:1261197"/>
<dbReference type="Proteomes" id="UP000002122">
    <property type="component" value="Segment"/>
</dbReference>
<dbReference type="GO" id="GO:0004857">
    <property type="term" value="F:enzyme inhibitor activity"/>
    <property type="evidence" value="ECO:0007669"/>
    <property type="project" value="InterPro"/>
</dbReference>
<dbReference type="GO" id="GO:0031640">
    <property type="term" value="P:killing of cells of another organism"/>
    <property type="evidence" value="ECO:0007669"/>
    <property type="project" value="UniProtKB-KW"/>
</dbReference>
<dbReference type="InterPro" id="IPR007605">
    <property type="entry name" value="Micrvir_lysisE"/>
</dbReference>
<dbReference type="Pfam" id="PF04517">
    <property type="entry name" value="Microvir_lysis"/>
    <property type="match status" value="1"/>
</dbReference>
<comment type="function">
    <text>E protein is responsible for host cell lysis.</text>
</comment>
<comment type="miscellaneous">
    <text>Phi KhT, a host-range mutant of phi K, can grow on E.coli C and B, besides K12, and is more thermosensitive than the parental phage phi K.</text>
</comment>
<name>VGE_BPPHK</name>
<reference key="1">
    <citation type="journal article" date="1996" name="J. Biochem.">
        <title>The virion proteins encoded by bacteriophage phi K and its host-range mutant phi KhT: host-range determination and DNA binding properties.</title>
        <authorList>
            <person name="Kodaira K."/>
            <person name="Oki M."/>
            <person name="Kakikawa M."/>
            <person name="Kimoto H."/>
            <person name="Taketo A."/>
        </authorList>
    </citation>
    <scope>NUCLEOTIDE SEQUENCE [GENOMIC DNA] (PHI-K AND MUTANT PHI KHT)</scope>
</reference>
<organismHost>
    <name type="scientific">Escherichia coli</name>
    <dbReference type="NCBI Taxonomy" id="562"/>
</organismHost>
<accession>Q38040</accession>
<organism>
    <name type="scientific">Enterobacteria phage phiK</name>
    <name type="common">Bacteriophage phi-K</name>
    <dbReference type="NCBI Taxonomy" id="10848"/>
    <lineage>
        <taxon>Viruses</taxon>
        <taxon>Monodnaviria</taxon>
        <taxon>Sangervirae</taxon>
        <taxon>Phixviricota</taxon>
        <taxon>Malgrandaviricetes</taxon>
        <taxon>Petitvirales</taxon>
        <taxon>Microviridae</taxon>
        <taxon>Bullavirinae</taxon>
        <taxon>Alphatrevirus</taxon>
    </lineage>
</organism>
<keyword id="KW-0204">Cytolysis</keyword>
<keyword id="KW-0578">Host cell lysis by virus</keyword>
<keyword id="KW-1188">Viral release from host cell</keyword>
<sequence length="75" mass="8441">MERWTLSAILAFLLLLSLLLPSLLIMFIPSTFRQHASLWKARSLAKTLLMASSARLTPLSSSRTPCVLRQDSKKL</sequence>